<dbReference type="EMBL" id="AF280996">
    <property type="protein sequence ID" value="AAK69135.1"/>
    <property type="molecule type" value="Genomic_DNA"/>
</dbReference>
<dbReference type="EMBL" id="EU342371">
    <property type="protein sequence ID" value="ABY26774.1"/>
    <property type="molecule type" value="Genomic_DNA"/>
</dbReference>
<dbReference type="EMBL" id="AP009568">
    <property type="protein sequence ID" value="BAH11175.1"/>
    <property type="status" value="ALT_INIT"/>
    <property type="molecule type" value="Genomic_DNA"/>
</dbReference>
<dbReference type="RefSeq" id="YP_001876561.1">
    <property type="nucleotide sequence ID" value="NC_010654.1"/>
</dbReference>
<dbReference type="GeneID" id="6276182"/>
<dbReference type="GO" id="GO:0009507">
    <property type="term" value="C:chloroplast"/>
    <property type="evidence" value="ECO:0007669"/>
    <property type="project" value="UniProtKB-SubCell"/>
</dbReference>
<dbReference type="GO" id="GO:0003723">
    <property type="term" value="F:RNA binding"/>
    <property type="evidence" value="ECO:0007669"/>
    <property type="project" value="UniProtKB-KW"/>
</dbReference>
<dbReference type="GO" id="GO:0006397">
    <property type="term" value="P:mRNA processing"/>
    <property type="evidence" value="ECO:0007669"/>
    <property type="project" value="UniProtKB-KW"/>
</dbReference>
<dbReference type="GO" id="GO:0008380">
    <property type="term" value="P:RNA splicing"/>
    <property type="evidence" value="ECO:0007669"/>
    <property type="project" value="UniProtKB-UniRule"/>
</dbReference>
<dbReference type="GO" id="GO:0008033">
    <property type="term" value="P:tRNA processing"/>
    <property type="evidence" value="ECO:0007669"/>
    <property type="project" value="UniProtKB-KW"/>
</dbReference>
<dbReference type="HAMAP" id="MF_01390">
    <property type="entry name" value="MatK"/>
    <property type="match status" value="1"/>
</dbReference>
<dbReference type="InterPro" id="IPR024937">
    <property type="entry name" value="Domain_X"/>
</dbReference>
<dbReference type="InterPro" id="IPR002866">
    <property type="entry name" value="Maturase_MatK"/>
</dbReference>
<dbReference type="InterPro" id="IPR024942">
    <property type="entry name" value="Maturase_MatK_N"/>
</dbReference>
<dbReference type="PANTHER" id="PTHR34811">
    <property type="entry name" value="MATURASE K"/>
    <property type="match status" value="1"/>
</dbReference>
<dbReference type="PANTHER" id="PTHR34811:SF1">
    <property type="entry name" value="MATURASE K"/>
    <property type="match status" value="1"/>
</dbReference>
<dbReference type="Pfam" id="PF01348">
    <property type="entry name" value="Intron_maturas2"/>
    <property type="match status" value="1"/>
</dbReference>
<dbReference type="Pfam" id="PF01824">
    <property type="entry name" value="MatK_N"/>
    <property type="match status" value="1"/>
</dbReference>
<proteinExistence type="inferred from homology"/>
<sequence length="524" mass="63023">MGNFYRKNIEILGQQRFLYPLLFQDEFYAIAQNLFSNPRASVEVREEICKNCNSFSFFTVKRLIFKIRKRNVFLESKNKNSISLALIAEGLTLGLDVFFSAQWKRFVDGEGGTEQLSFQSIHSIFAYLDETTPYSFSSLGIRIPSYVHPELFIRMFNCLCWIDDVCFLHLLSSMLCFLKHLTILDKFIFFNSKGFIRLVLFLWNIFVSKGESSKISLWKQKCYRAKFKSFGSFAEQTHFHRKMKLKNPKIKAHEKFSEVFFFSHYSRFGEKSVLIGTPILIKKYRYFFCHFWQTSFFFSETYGLFVHEFSRKNISLIGYSFYFQNHRTFFRIKMFYDFFFTELVNNEFHPKFGIISIMKFLSIEGFCDIMGRPISKLSWTCFTDDDIFDKCDRFWKILYYYYCGAKNKAYLDRIKYILLLSCFKTIAFKHKSTIRVVRKEFDFELRKKFFPKEIEFERDFLCSRFAQKFKKWLLKINLATERFWLLNILKVHFLTKSWHKDQDALDFCLIVEKNNILPMLNNFL</sequence>
<gene>
    <name evidence="1" type="primary">matK</name>
</gene>
<keyword id="KW-0150">Chloroplast</keyword>
<keyword id="KW-0507">mRNA processing</keyword>
<keyword id="KW-0934">Plastid</keyword>
<keyword id="KW-0694">RNA-binding</keyword>
<keyword id="KW-0819">tRNA processing</keyword>
<name>MATK_WELMI</name>
<accession>Q8MEW9</accession>
<accession>B2Y1U4</accession>
<accession>B7ZHZ5</accession>
<geneLocation type="chloroplast"/>
<reference key="1">
    <citation type="submission" date="2000-06" db="EMBL/GenBank/DDBJ databases">
        <title>Chloroplast matK sequence data reconfirm the monophyly of extant gymnosperms and the coniferophytic origin of Gnetales.</title>
        <authorList>
            <person name="Chaw S.-M."/>
            <person name="Hu S.-H."/>
        </authorList>
    </citation>
    <scope>NUCLEOTIDE SEQUENCE [GENOMIC DNA]</scope>
</reference>
<reference key="2">
    <citation type="journal article" date="2008" name="BMC Evol. Biol.">
        <title>The complete plastid genome sequence of Welwitschia mirabilis: an unusually compact plastome with accelerated divergence rates.</title>
        <authorList>
            <person name="McCoy S.R."/>
            <person name="Kuehl J.V."/>
            <person name="Boore J.L."/>
            <person name="Raubeson L.A."/>
        </authorList>
    </citation>
    <scope>NUCLEOTIDE SEQUENCE [LARGE SCALE GENOMIC DNA]</scope>
</reference>
<reference key="3">
    <citation type="journal article" date="2008" name="J. Mol. Evol.">
        <title>Extensive reorganization of the plastid genome of Trifolium subterraneum (Fabaceae) is associated with numerous repeated sequences and novel DNA insertions.</title>
        <authorList>
            <person name="Cai Z."/>
            <person name="Guisinger M."/>
            <person name="Kim H.-G."/>
            <person name="Ruck E."/>
            <person name="Blazier J.C."/>
            <person name="McMurtry V."/>
            <person name="Kuehl J.V."/>
            <person name="Boore J."/>
            <person name="Jansen R.K."/>
        </authorList>
    </citation>
    <scope>NUCLEOTIDE SEQUENCE [LARGE SCALE GENOMIC DNA]</scope>
</reference>
<evidence type="ECO:0000255" key="1">
    <source>
        <dbReference type="HAMAP-Rule" id="MF_01390"/>
    </source>
</evidence>
<evidence type="ECO:0000305" key="2"/>
<feature type="chain" id="PRO_0000143789" description="Maturase K">
    <location>
        <begin position="1"/>
        <end position="524"/>
    </location>
</feature>
<protein>
    <recommendedName>
        <fullName evidence="1">Maturase K</fullName>
    </recommendedName>
    <alternativeName>
        <fullName evidence="1">Intron maturase</fullName>
    </alternativeName>
</protein>
<comment type="function">
    <text evidence="1">Usually encoded in the trnK tRNA gene intron. Probably assists in splicing its own and other chloroplast group II introns.</text>
</comment>
<comment type="subcellular location">
    <subcellularLocation>
        <location>Plastid</location>
        <location>Chloroplast</location>
    </subcellularLocation>
</comment>
<comment type="similarity">
    <text evidence="1">Belongs to the intron maturase 2 family. MatK subfamily.</text>
</comment>
<comment type="sequence caution" evidence="2">
    <conflict type="erroneous initiation">
        <sequence resource="EMBL-CDS" id="BAH11175"/>
    </conflict>
</comment>
<organism>
    <name type="scientific">Welwitschia mirabilis</name>
    <name type="common">Tree tumbo</name>
    <name type="synonym">Welwitschia bainesii</name>
    <dbReference type="NCBI Taxonomy" id="3377"/>
    <lineage>
        <taxon>Eukaryota</taxon>
        <taxon>Viridiplantae</taxon>
        <taxon>Streptophyta</taxon>
        <taxon>Embryophyta</taxon>
        <taxon>Tracheophyta</taxon>
        <taxon>Spermatophyta</taxon>
        <taxon>Gnetopsida</taxon>
        <taxon>Gnetidae</taxon>
        <taxon>Welwitschiales</taxon>
        <taxon>Welwitschiaceae</taxon>
        <taxon>Welwitschia</taxon>
    </lineage>
</organism>